<accession>Q9SU58</accession>
<accession>Q8GXR3</accession>
<evidence type="ECO:0000250" key="1"/>
<evidence type="ECO:0000250" key="2">
    <source>
        <dbReference type="UniProtKB" id="P19456"/>
    </source>
</evidence>
<evidence type="ECO:0000250" key="3">
    <source>
        <dbReference type="UniProtKB" id="P20649"/>
    </source>
</evidence>
<evidence type="ECO:0000250" key="4">
    <source>
        <dbReference type="UniProtKB" id="Q9LV11"/>
    </source>
</evidence>
<evidence type="ECO:0000255" key="5"/>
<evidence type="ECO:0000269" key="6">
    <source>
    </source>
</evidence>
<evidence type="ECO:0000305" key="7"/>
<evidence type="ECO:0000305" key="8">
    <source>
    </source>
</evidence>
<sequence length="960" mass="105718">MTTTVEDNREVLEAVLKEAVDLENVPIEEVFENLRCSKEGLTTQAADERLALFGHNKLEEKKESKFLKFLGFMWNPLSWVMEAAAIMAIALANGGGKPPDWQDFVGIITLLVINSTISFIEENNAGNAAAALMARLAPKAKVLRDGRWGEQDAAILVPGDIISIKLGDIVPADARLLEGDPLKIDQSALTGESLPVTKSSGDGVYSGSTCKQGEIEAVVIATGVHTFFGKAAHLVDTTNQIGHFQQVLTAIGNFCICSIAVGMLIEIVVMYPIQHRAYRPGIDNLLVLLIGGIPIAMPTVLSVTMAIGSHRLSQQGAITKRMTAIEEMAGMDVLCSDKTGTLTLNKLTVDKNLIEVFMKGVDADTVVLMAARASRLENQDAIDAAIVGMLADPKDARAGIQEVHFLPFNPTDKRTALTYIDNEGNTHRVSKGAPEQILNLAHNKSEIERRVHAVIDKFAERGLRSLAVAYQDVPEGRKDSAGGPWQFVGLMPLFDPPRHDSAETIRRALNLGVSVKMITGDQLAIGKETGRRLGMGTNMYPSSALLGQNKDESIVALPVDELIEKADGFAGVFPEHKYEIVKRLQARKHICGMTGDGVNDAPALKKADIGIAVADATDAARSASDIVLTEPGLSVIISAVLTSRAIFQRMKNYTIYAVSITIRIVLGFMLLALIWQFDFPPFMVLIIAILNDGTIMTISKDRVKPSPLPDSWKLSEIFATGVVFGSYMAMMTVIFFWVSYKTDFFPRTFGVATLEKTAHDDFRKLASAIYLQVSIISQALIFVTRSRSWSFVERPGIFLMIAFILAQLVATLIAVYANWSFAAIEGIGWGWAGVIWLYNIIFYIPLDFIKFFIRYALSGRAWDLVIEQRVAFTRQKDFGKEQRELQWAHAQRTLHGLQAPDTKMFTDRTHVSELNQMAEEAKRRAEIARLRELHTLKGHVESVVRLKGLDIETIQQAYTV</sequence>
<proteinExistence type="evidence at transcript level"/>
<protein>
    <recommendedName>
        <fullName>ATPase 4, plasma membrane-type</fullName>
        <ecNumber>7.1.2.1</ecNumber>
    </recommendedName>
    <alternativeName>
        <fullName>Proton pump 4</fullName>
    </alternativeName>
</protein>
<organism>
    <name type="scientific">Arabidopsis thaliana</name>
    <name type="common">Mouse-ear cress</name>
    <dbReference type="NCBI Taxonomy" id="3702"/>
    <lineage>
        <taxon>Eukaryota</taxon>
        <taxon>Viridiplantae</taxon>
        <taxon>Streptophyta</taxon>
        <taxon>Embryophyta</taxon>
        <taxon>Tracheophyta</taxon>
        <taxon>Spermatophyta</taxon>
        <taxon>Magnoliopsida</taxon>
        <taxon>eudicotyledons</taxon>
        <taxon>Gunneridae</taxon>
        <taxon>Pentapetalae</taxon>
        <taxon>rosids</taxon>
        <taxon>malvids</taxon>
        <taxon>Brassicales</taxon>
        <taxon>Brassicaceae</taxon>
        <taxon>Camelineae</taxon>
        <taxon>Arabidopsis</taxon>
    </lineage>
</organism>
<dbReference type="EC" id="7.1.2.1"/>
<dbReference type="EMBL" id="AL049658">
    <property type="protein sequence ID" value="CAB41144.1"/>
    <property type="status" value="ALT_SEQ"/>
    <property type="molecule type" value="Genomic_DNA"/>
</dbReference>
<dbReference type="EMBL" id="CP002686">
    <property type="protein sequence ID" value="AEE78350.1"/>
    <property type="molecule type" value="Genomic_DNA"/>
</dbReference>
<dbReference type="EMBL" id="CP002686">
    <property type="protein sequence ID" value="ANM63639.1"/>
    <property type="molecule type" value="Genomic_DNA"/>
</dbReference>
<dbReference type="EMBL" id="AK118088">
    <property type="protein sequence ID" value="BAC42716.1"/>
    <property type="molecule type" value="mRNA"/>
</dbReference>
<dbReference type="PIR" id="T06688">
    <property type="entry name" value="T06688"/>
</dbReference>
<dbReference type="RefSeq" id="NP_001325714.1">
    <property type="nucleotide sequence ID" value="NM_001339341.1"/>
</dbReference>
<dbReference type="RefSeq" id="NP_190378.2">
    <property type="nucleotide sequence ID" value="NM_114664.4"/>
</dbReference>
<dbReference type="SMR" id="Q9SU58"/>
<dbReference type="BioGRID" id="9270">
    <property type="interactions" value="4"/>
</dbReference>
<dbReference type="FunCoup" id="Q9SU58">
    <property type="interactions" value="247"/>
</dbReference>
<dbReference type="STRING" id="3702.Q9SU58"/>
<dbReference type="iPTMnet" id="Q9SU58"/>
<dbReference type="PaxDb" id="3702-AT3G47950.1"/>
<dbReference type="ProteomicsDB" id="226184"/>
<dbReference type="EnsemblPlants" id="AT3G47950.1">
    <property type="protein sequence ID" value="AT3G47950.1"/>
    <property type="gene ID" value="AT3G47950"/>
</dbReference>
<dbReference type="EnsemblPlants" id="AT3G47950.2">
    <property type="protein sequence ID" value="AT3G47950.2"/>
    <property type="gene ID" value="AT3G47950"/>
</dbReference>
<dbReference type="GeneID" id="823950"/>
<dbReference type="Gramene" id="AT3G47950.1">
    <property type="protein sequence ID" value="AT3G47950.1"/>
    <property type="gene ID" value="AT3G47950"/>
</dbReference>
<dbReference type="Gramene" id="AT3G47950.2">
    <property type="protein sequence ID" value="AT3G47950.2"/>
    <property type="gene ID" value="AT3G47950"/>
</dbReference>
<dbReference type="KEGG" id="ath:AT3G47950"/>
<dbReference type="Araport" id="AT3G47950"/>
<dbReference type="TAIR" id="AT3G47950">
    <property type="gene designation" value="HA4"/>
</dbReference>
<dbReference type="eggNOG" id="KOG0205">
    <property type="taxonomic scope" value="Eukaryota"/>
</dbReference>
<dbReference type="HOGENOM" id="CLU_002360_6_4_1"/>
<dbReference type="InParanoid" id="Q9SU58"/>
<dbReference type="OMA" id="VWTLLQC"/>
<dbReference type="OrthoDB" id="116380at2759"/>
<dbReference type="PhylomeDB" id="Q9SU58"/>
<dbReference type="BioCyc" id="ARA:AT3G47950-MONOMER"/>
<dbReference type="CD-CODE" id="4299E36E">
    <property type="entry name" value="Nucleolus"/>
</dbReference>
<dbReference type="PRO" id="PR:Q9SU58"/>
<dbReference type="Proteomes" id="UP000006548">
    <property type="component" value="Chromosome 3"/>
</dbReference>
<dbReference type="ExpressionAtlas" id="Q9SU58">
    <property type="expression patterns" value="baseline and differential"/>
</dbReference>
<dbReference type="GO" id="GO:0005886">
    <property type="term" value="C:plasma membrane"/>
    <property type="evidence" value="ECO:0007005"/>
    <property type="project" value="TAIR"/>
</dbReference>
<dbReference type="GO" id="GO:0005524">
    <property type="term" value="F:ATP binding"/>
    <property type="evidence" value="ECO:0007669"/>
    <property type="project" value="UniProtKB-KW"/>
</dbReference>
<dbReference type="GO" id="GO:0016887">
    <property type="term" value="F:ATP hydrolysis activity"/>
    <property type="evidence" value="ECO:0007669"/>
    <property type="project" value="InterPro"/>
</dbReference>
<dbReference type="GO" id="GO:0046872">
    <property type="term" value="F:metal ion binding"/>
    <property type="evidence" value="ECO:0007669"/>
    <property type="project" value="UniProtKB-KW"/>
</dbReference>
<dbReference type="GO" id="GO:0008553">
    <property type="term" value="F:P-type proton-exporting transporter activity"/>
    <property type="evidence" value="ECO:0000250"/>
    <property type="project" value="TAIR"/>
</dbReference>
<dbReference type="GO" id="GO:0120029">
    <property type="term" value="P:proton export across plasma membrane"/>
    <property type="evidence" value="ECO:0007669"/>
    <property type="project" value="InterPro"/>
</dbReference>
<dbReference type="GO" id="GO:0009651">
    <property type="term" value="P:response to salt stress"/>
    <property type="evidence" value="ECO:0000315"/>
    <property type="project" value="TAIR"/>
</dbReference>
<dbReference type="CDD" id="cd02076">
    <property type="entry name" value="P-type_ATPase_H"/>
    <property type="match status" value="1"/>
</dbReference>
<dbReference type="FunFam" id="1.20.1110.10:FF:000045">
    <property type="entry name" value="ATPase 4 plasma membrane-type"/>
    <property type="match status" value="1"/>
</dbReference>
<dbReference type="FunFam" id="2.70.150.10:FF:000004">
    <property type="entry name" value="Plasma membrane ATPase"/>
    <property type="match status" value="1"/>
</dbReference>
<dbReference type="FunFam" id="3.40.1110.10:FF:000004">
    <property type="entry name" value="Plasma membrane ATPase"/>
    <property type="match status" value="1"/>
</dbReference>
<dbReference type="FunFam" id="3.40.50.1000:FF:000211">
    <property type="entry name" value="Plasma membrane ATPase"/>
    <property type="match status" value="1"/>
</dbReference>
<dbReference type="Gene3D" id="6.10.140.890">
    <property type="match status" value="1"/>
</dbReference>
<dbReference type="Gene3D" id="3.40.1110.10">
    <property type="entry name" value="Calcium-transporting ATPase, cytoplasmic domain N"/>
    <property type="match status" value="1"/>
</dbReference>
<dbReference type="Gene3D" id="2.70.150.10">
    <property type="entry name" value="Calcium-transporting ATPase, cytoplasmic transduction domain A"/>
    <property type="match status" value="1"/>
</dbReference>
<dbReference type="Gene3D" id="1.20.1110.10">
    <property type="entry name" value="Calcium-transporting ATPase, transmembrane domain"/>
    <property type="match status" value="1"/>
</dbReference>
<dbReference type="Gene3D" id="3.40.50.1000">
    <property type="entry name" value="HAD superfamily/HAD-like"/>
    <property type="match status" value="1"/>
</dbReference>
<dbReference type="InterPro" id="IPR004014">
    <property type="entry name" value="ATPase_P-typ_cation-transptr_N"/>
</dbReference>
<dbReference type="InterPro" id="IPR023299">
    <property type="entry name" value="ATPase_P-typ_cyto_dom_N"/>
</dbReference>
<dbReference type="InterPro" id="IPR018303">
    <property type="entry name" value="ATPase_P-typ_P_site"/>
</dbReference>
<dbReference type="InterPro" id="IPR023298">
    <property type="entry name" value="ATPase_P-typ_TM_dom_sf"/>
</dbReference>
<dbReference type="InterPro" id="IPR008250">
    <property type="entry name" value="ATPase_P-typ_transduc_dom_A_sf"/>
</dbReference>
<dbReference type="InterPro" id="IPR036412">
    <property type="entry name" value="HAD-like_sf"/>
</dbReference>
<dbReference type="InterPro" id="IPR023214">
    <property type="entry name" value="HAD_sf"/>
</dbReference>
<dbReference type="InterPro" id="IPR006534">
    <property type="entry name" value="P-type_ATPase_IIIA"/>
</dbReference>
<dbReference type="InterPro" id="IPR001757">
    <property type="entry name" value="P_typ_ATPase"/>
</dbReference>
<dbReference type="InterPro" id="IPR044492">
    <property type="entry name" value="P_typ_ATPase_HD_dom"/>
</dbReference>
<dbReference type="NCBIfam" id="TIGR01647">
    <property type="entry name" value="ATPase-IIIA_H"/>
    <property type="match status" value="1"/>
</dbReference>
<dbReference type="NCBIfam" id="TIGR01494">
    <property type="entry name" value="ATPase_P-type"/>
    <property type="match status" value="2"/>
</dbReference>
<dbReference type="PANTHER" id="PTHR42861">
    <property type="entry name" value="CALCIUM-TRANSPORTING ATPASE"/>
    <property type="match status" value="1"/>
</dbReference>
<dbReference type="Pfam" id="PF00690">
    <property type="entry name" value="Cation_ATPase_N"/>
    <property type="match status" value="1"/>
</dbReference>
<dbReference type="Pfam" id="PF00122">
    <property type="entry name" value="E1-E2_ATPase"/>
    <property type="match status" value="1"/>
</dbReference>
<dbReference type="Pfam" id="PF00702">
    <property type="entry name" value="Hydrolase"/>
    <property type="match status" value="1"/>
</dbReference>
<dbReference type="PRINTS" id="PR00119">
    <property type="entry name" value="CATATPASE"/>
</dbReference>
<dbReference type="PRINTS" id="PR00120">
    <property type="entry name" value="HATPASE"/>
</dbReference>
<dbReference type="SFLD" id="SFLDS00003">
    <property type="entry name" value="Haloacid_Dehalogenase"/>
    <property type="match status" value="1"/>
</dbReference>
<dbReference type="SFLD" id="SFLDF00027">
    <property type="entry name" value="p-type_atpase"/>
    <property type="match status" value="1"/>
</dbReference>
<dbReference type="SMART" id="SM00831">
    <property type="entry name" value="Cation_ATPase_N"/>
    <property type="match status" value="1"/>
</dbReference>
<dbReference type="SUPFAM" id="SSF81653">
    <property type="entry name" value="Calcium ATPase, transduction domain A"/>
    <property type="match status" value="1"/>
</dbReference>
<dbReference type="SUPFAM" id="SSF81665">
    <property type="entry name" value="Calcium ATPase, transmembrane domain M"/>
    <property type="match status" value="1"/>
</dbReference>
<dbReference type="SUPFAM" id="SSF56784">
    <property type="entry name" value="HAD-like"/>
    <property type="match status" value="1"/>
</dbReference>
<dbReference type="PROSITE" id="PS00154">
    <property type="entry name" value="ATPASE_E1_E2"/>
    <property type="match status" value="1"/>
</dbReference>
<gene>
    <name type="primary">AHA4</name>
    <name type="ordered locus">At3g47950</name>
    <name type="ORF">T17F15.180</name>
</gene>
<keyword id="KW-0067">ATP-binding</keyword>
<keyword id="KW-1003">Cell membrane</keyword>
<keyword id="KW-0375">Hydrogen ion transport</keyword>
<keyword id="KW-0406">Ion transport</keyword>
<keyword id="KW-0460">Magnesium</keyword>
<keyword id="KW-0472">Membrane</keyword>
<keyword id="KW-0479">Metal-binding</keyword>
<keyword id="KW-0547">Nucleotide-binding</keyword>
<keyword id="KW-0597">Phosphoprotein</keyword>
<keyword id="KW-1185">Reference proteome</keyword>
<keyword id="KW-1278">Translocase</keyword>
<keyword id="KW-0812">Transmembrane</keyword>
<keyword id="KW-1133">Transmembrane helix</keyword>
<keyword id="KW-0813">Transport</keyword>
<comment type="function">
    <text evidence="1">The plasma membrane H(+) ATPase of plants and fungi generates a proton gradient that drives the active transport of nutrients by H(+)-symport. The resulting external acidification and/or internal alkinization may mediate growth responses (By similarity).</text>
</comment>
<comment type="catalytic activity">
    <reaction>
        <text>ATP + H2O + H(+)(in) = ADP + phosphate + 2 H(+)(out)</text>
        <dbReference type="Rhea" id="RHEA:20852"/>
        <dbReference type="ChEBI" id="CHEBI:15377"/>
        <dbReference type="ChEBI" id="CHEBI:15378"/>
        <dbReference type="ChEBI" id="CHEBI:30616"/>
        <dbReference type="ChEBI" id="CHEBI:43474"/>
        <dbReference type="ChEBI" id="CHEBI:456216"/>
        <dbReference type="EC" id="7.1.2.1"/>
    </reaction>
</comment>
<comment type="subunit">
    <text evidence="1">Binds to 14-3-3 proteins. The binding is induced by phosphorylation of Thr-959. Binding to 14-3-3 proteins activates the H(+)-ATPase (By similarity).</text>
</comment>
<comment type="subcellular location">
    <subcellularLocation>
        <location evidence="8">Cell membrane</location>
        <topology evidence="8">Multi-pass membrane protein</topology>
    </subcellularLocation>
</comment>
<comment type="tissue specificity">
    <text evidence="6">Expressed in guard cells and roots.</text>
</comment>
<comment type="similarity">
    <text evidence="7">Belongs to the cation transport ATPase (P-type) (TC 3.A.3) family. Type IIIA subfamily.</text>
</comment>
<comment type="sequence caution" evidence="7">
    <conflict type="erroneous gene model prediction">
        <sequence resource="EMBL-CDS" id="CAB41144"/>
    </conflict>
</comment>
<name>PMA4_ARATH</name>
<feature type="chain" id="PRO_0000046277" description="ATPase 4, plasma membrane-type">
    <location>
        <begin position="1"/>
        <end position="960"/>
    </location>
</feature>
<feature type="topological domain" description="Cytoplasmic" evidence="5">
    <location>
        <begin position="1"/>
        <end position="69"/>
    </location>
</feature>
<feature type="transmembrane region" description="Helical; Name=1" evidence="5">
    <location>
        <begin position="70"/>
        <end position="89"/>
    </location>
</feature>
<feature type="topological domain" description="Extracellular" evidence="5">
    <location>
        <begin position="90"/>
        <end position="101"/>
    </location>
</feature>
<feature type="transmembrane region" description="Helical; Name=2" evidence="5">
    <location>
        <begin position="102"/>
        <end position="122"/>
    </location>
</feature>
<feature type="topological domain" description="Cytoplasmic" evidence="5">
    <location>
        <begin position="123"/>
        <end position="251"/>
    </location>
</feature>
<feature type="transmembrane region" description="Helical; Name=3" evidence="5">
    <location>
        <begin position="252"/>
        <end position="272"/>
    </location>
</feature>
<feature type="topological domain" description="Extracellular" evidence="5">
    <location>
        <begin position="273"/>
        <end position="281"/>
    </location>
</feature>
<feature type="transmembrane region" description="Helical; Name=4" evidence="5">
    <location>
        <begin position="282"/>
        <end position="299"/>
    </location>
</feature>
<feature type="topological domain" description="Cytoplasmic" evidence="5">
    <location>
        <begin position="300"/>
        <end position="651"/>
    </location>
</feature>
<feature type="transmembrane region" description="Helical; Name=5" evidence="5">
    <location>
        <begin position="652"/>
        <end position="673"/>
    </location>
</feature>
<feature type="topological domain" description="Extracellular" evidence="5">
    <location>
        <begin position="674"/>
        <end position="678"/>
    </location>
</feature>
<feature type="transmembrane region" description="Helical; Name=6" evidence="5">
    <location>
        <begin position="679"/>
        <end position="701"/>
    </location>
</feature>
<feature type="topological domain" description="Cytoplasmic" evidence="5">
    <location>
        <begin position="702"/>
        <end position="717"/>
    </location>
</feature>
<feature type="transmembrane region" description="Helical; Name=7" evidence="5">
    <location>
        <begin position="718"/>
        <end position="738"/>
    </location>
</feature>
<feature type="topological domain" description="Extracellular" evidence="5">
    <location>
        <begin position="739"/>
        <end position="763"/>
    </location>
</feature>
<feature type="transmembrane region" description="Helical; Name=8" evidence="5">
    <location>
        <begin position="764"/>
        <end position="784"/>
    </location>
</feature>
<feature type="topological domain" description="Cytoplasmic" evidence="5">
    <location>
        <begin position="785"/>
        <end position="796"/>
    </location>
</feature>
<feature type="transmembrane region" description="Helical; Name=9" evidence="5">
    <location>
        <begin position="797"/>
        <end position="817"/>
    </location>
</feature>
<feature type="topological domain" description="Extracellular" evidence="5">
    <location>
        <begin position="818"/>
        <end position="825"/>
    </location>
</feature>
<feature type="transmembrane region" description="Helical; Name=10" evidence="5">
    <location>
        <begin position="826"/>
        <end position="846"/>
    </location>
</feature>
<feature type="topological domain" description="Cytoplasmic" evidence="5">
    <location>
        <begin position="847"/>
        <end position="960"/>
    </location>
</feature>
<feature type="region of interest" description="Interaction with 14-3-3 proteins" evidence="1">
    <location>
        <begin position="958"/>
        <end position="960"/>
    </location>
</feature>
<feature type="active site" description="4-aspartylphosphate intermediate" evidence="1">
    <location>
        <position position="337"/>
    </location>
</feature>
<feature type="binding site" evidence="1">
    <location>
        <position position="596"/>
    </location>
    <ligand>
        <name>Mg(2+)</name>
        <dbReference type="ChEBI" id="CHEBI:18420"/>
    </ligand>
</feature>
<feature type="binding site" evidence="1">
    <location>
        <position position="600"/>
    </location>
    <ligand>
        <name>Mg(2+)</name>
        <dbReference type="ChEBI" id="CHEBI:18420"/>
    </ligand>
</feature>
<feature type="modified residue" description="Phosphothreonine" evidence="4">
    <location>
        <position position="893"/>
    </location>
</feature>
<feature type="modified residue" description="Phosphoserine" evidence="2">
    <location>
        <position position="942"/>
    </location>
</feature>
<feature type="modified residue" description="Phosphothreonine" evidence="3">
    <location>
        <position position="959"/>
    </location>
</feature>
<reference key="1">
    <citation type="journal article" date="2000" name="Nature">
        <title>Sequence and analysis of chromosome 3 of the plant Arabidopsis thaliana.</title>
        <authorList>
            <person name="Salanoubat M."/>
            <person name="Lemcke K."/>
            <person name="Rieger M."/>
            <person name="Ansorge W."/>
            <person name="Unseld M."/>
            <person name="Fartmann B."/>
            <person name="Valle G."/>
            <person name="Bloecker H."/>
            <person name="Perez-Alonso M."/>
            <person name="Obermaier B."/>
            <person name="Delseny M."/>
            <person name="Boutry M."/>
            <person name="Grivell L.A."/>
            <person name="Mache R."/>
            <person name="Puigdomenech P."/>
            <person name="De Simone V."/>
            <person name="Choisne N."/>
            <person name="Artiguenave F."/>
            <person name="Robert C."/>
            <person name="Brottier P."/>
            <person name="Wincker P."/>
            <person name="Cattolico L."/>
            <person name="Weissenbach J."/>
            <person name="Saurin W."/>
            <person name="Quetier F."/>
            <person name="Schaefer M."/>
            <person name="Mueller-Auer S."/>
            <person name="Gabel C."/>
            <person name="Fuchs M."/>
            <person name="Benes V."/>
            <person name="Wurmbach E."/>
            <person name="Drzonek H."/>
            <person name="Erfle H."/>
            <person name="Jordan N."/>
            <person name="Bangert S."/>
            <person name="Wiedelmann R."/>
            <person name="Kranz H."/>
            <person name="Voss H."/>
            <person name="Holland R."/>
            <person name="Brandt P."/>
            <person name="Nyakatura G."/>
            <person name="Vezzi A."/>
            <person name="D'Angelo M."/>
            <person name="Pallavicini A."/>
            <person name="Toppo S."/>
            <person name="Simionati B."/>
            <person name="Conrad A."/>
            <person name="Hornischer K."/>
            <person name="Kauer G."/>
            <person name="Loehnert T.-H."/>
            <person name="Nordsiek G."/>
            <person name="Reichelt J."/>
            <person name="Scharfe M."/>
            <person name="Schoen O."/>
            <person name="Bargues M."/>
            <person name="Terol J."/>
            <person name="Climent J."/>
            <person name="Navarro P."/>
            <person name="Collado C."/>
            <person name="Perez-Perez A."/>
            <person name="Ottenwaelder B."/>
            <person name="Duchemin D."/>
            <person name="Cooke R."/>
            <person name="Laudie M."/>
            <person name="Berger-Llauro C."/>
            <person name="Purnelle B."/>
            <person name="Masuy D."/>
            <person name="de Haan M."/>
            <person name="Maarse A.C."/>
            <person name="Alcaraz J.-P."/>
            <person name="Cottet A."/>
            <person name="Casacuberta E."/>
            <person name="Monfort A."/>
            <person name="Argiriou A."/>
            <person name="Flores M."/>
            <person name="Liguori R."/>
            <person name="Vitale D."/>
            <person name="Mannhaupt G."/>
            <person name="Haase D."/>
            <person name="Schoof H."/>
            <person name="Rudd S."/>
            <person name="Zaccaria P."/>
            <person name="Mewes H.-W."/>
            <person name="Mayer K.F.X."/>
            <person name="Kaul S."/>
            <person name="Town C.D."/>
            <person name="Koo H.L."/>
            <person name="Tallon L.J."/>
            <person name="Jenkins J."/>
            <person name="Rooney T."/>
            <person name="Rizzo M."/>
            <person name="Walts A."/>
            <person name="Utterback T."/>
            <person name="Fujii C.Y."/>
            <person name="Shea T.P."/>
            <person name="Creasy T.H."/>
            <person name="Haas B."/>
            <person name="Maiti R."/>
            <person name="Wu D."/>
            <person name="Peterson J."/>
            <person name="Van Aken S."/>
            <person name="Pai G."/>
            <person name="Militscher J."/>
            <person name="Sellers P."/>
            <person name="Gill J.E."/>
            <person name="Feldblyum T.V."/>
            <person name="Preuss D."/>
            <person name="Lin X."/>
            <person name="Nierman W.C."/>
            <person name="Salzberg S.L."/>
            <person name="White O."/>
            <person name="Venter J.C."/>
            <person name="Fraser C.M."/>
            <person name="Kaneko T."/>
            <person name="Nakamura Y."/>
            <person name="Sato S."/>
            <person name="Kato T."/>
            <person name="Asamizu E."/>
            <person name="Sasamoto S."/>
            <person name="Kimura T."/>
            <person name="Idesawa K."/>
            <person name="Kawashima K."/>
            <person name="Kishida Y."/>
            <person name="Kiyokawa C."/>
            <person name="Kohara M."/>
            <person name="Matsumoto M."/>
            <person name="Matsuno A."/>
            <person name="Muraki A."/>
            <person name="Nakayama S."/>
            <person name="Nakazaki N."/>
            <person name="Shinpo S."/>
            <person name="Takeuchi C."/>
            <person name="Wada T."/>
            <person name="Watanabe A."/>
            <person name="Yamada M."/>
            <person name="Yasuda M."/>
            <person name="Tabata S."/>
        </authorList>
    </citation>
    <scope>NUCLEOTIDE SEQUENCE [LARGE SCALE GENOMIC DNA]</scope>
    <source>
        <strain>cv. Columbia</strain>
    </source>
</reference>
<reference key="2">
    <citation type="journal article" date="2017" name="Plant J.">
        <title>Araport11: a complete reannotation of the Arabidopsis thaliana reference genome.</title>
        <authorList>
            <person name="Cheng C.Y."/>
            <person name="Krishnakumar V."/>
            <person name="Chan A.P."/>
            <person name="Thibaud-Nissen F."/>
            <person name="Schobel S."/>
            <person name="Town C.D."/>
        </authorList>
    </citation>
    <scope>GENOME REANNOTATION</scope>
    <source>
        <strain>cv. Columbia</strain>
    </source>
</reference>
<reference key="3">
    <citation type="journal article" date="2002" name="Science">
        <title>Functional annotation of a full-length Arabidopsis cDNA collection.</title>
        <authorList>
            <person name="Seki M."/>
            <person name="Narusaka M."/>
            <person name="Kamiya A."/>
            <person name="Ishida J."/>
            <person name="Satou M."/>
            <person name="Sakurai T."/>
            <person name="Nakajima M."/>
            <person name="Enju A."/>
            <person name="Akiyama K."/>
            <person name="Oono Y."/>
            <person name="Muramatsu M."/>
            <person name="Hayashizaki Y."/>
            <person name="Kawai J."/>
            <person name="Carninci P."/>
            <person name="Itoh M."/>
            <person name="Ishii Y."/>
            <person name="Arakawa T."/>
            <person name="Shibata K."/>
            <person name="Shinagawa A."/>
            <person name="Shinozaki K."/>
        </authorList>
    </citation>
    <scope>NUCLEOTIDE SEQUENCE [LARGE SCALE MRNA]</scope>
    <source>
        <strain>cv. Columbia</strain>
    </source>
</reference>
<reference key="4">
    <citation type="journal article" date="2004" name="Plant Cell">
        <title>Phosphoproteomics of the Arabidopsis plasma membrane and a new phosphorylation site database.</title>
        <authorList>
            <person name="Nuehse T.S."/>
            <person name="Stensballe A."/>
            <person name="Jensen O.N."/>
            <person name="Peck S.C."/>
        </authorList>
    </citation>
    <scope>SUBCELLULAR LOCATION</scope>
</reference>
<reference key="5">
    <citation type="journal article" date="2005" name="Plant Cell Physiol.">
        <title>Biochemical characterization of plasma membrane H+-ATPase activation in guard cell protoplasts of Arabidopsis thaliana in response to blue light.</title>
        <authorList>
            <person name="Ueno K."/>
            <person name="Kinoshita T."/>
            <person name="Inoue S."/>
            <person name="Emi T."/>
            <person name="Shimazaki K."/>
        </authorList>
    </citation>
    <scope>TISSUE SPECIFICITY</scope>
    <source>
        <strain>cv. Columbia GL1</strain>
    </source>
</reference>